<evidence type="ECO:0000255" key="1">
    <source>
        <dbReference type="HAMAP-Rule" id="MF_00380"/>
    </source>
</evidence>
<evidence type="ECO:0000256" key="2">
    <source>
        <dbReference type="SAM" id="MobiDB-lite"/>
    </source>
</evidence>
<proteinExistence type="inferred from homology"/>
<reference key="1">
    <citation type="journal article" date="2008" name="DNA Res.">
        <title>Complete genome sequence and comparative analysis of the wild-type commensal Escherichia coli strain SE11 isolated from a healthy adult.</title>
        <authorList>
            <person name="Oshima K."/>
            <person name="Toh H."/>
            <person name="Ogura Y."/>
            <person name="Sasamoto H."/>
            <person name="Morita H."/>
            <person name="Park S.-H."/>
            <person name="Ooka T."/>
            <person name="Iyoda S."/>
            <person name="Taylor T.D."/>
            <person name="Hayashi T."/>
            <person name="Itoh K."/>
            <person name="Hattori M."/>
        </authorList>
    </citation>
    <scope>NUCLEOTIDE SEQUENCE [LARGE SCALE GENOMIC DNA]</scope>
    <source>
        <strain>SE11</strain>
    </source>
</reference>
<feature type="chain" id="PRO_1000122140" description="Integration host factor subunit alpha">
    <location>
        <begin position="1"/>
        <end position="99"/>
    </location>
</feature>
<feature type="region of interest" description="Disordered" evidence="2">
    <location>
        <begin position="49"/>
        <end position="73"/>
    </location>
</feature>
<organism>
    <name type="scientific">Escherichia coli (strain SE11)</name>
    <dbReference type="NCBI Taxonomy" id="409438"/>
    <lineage>
        <taxon>Bacteria</taxon>
        <taxon>Pseudomonadati</taxon>
        <taxon>Pseudomonadota</taxon>
        <taxon>Gammaproteobacteria</taxon>
        <taxon>Enterobacterales</taxon>
        <taxon>Enterobacteriaceae</taxon>
        <taxon>Escherichia</taxon>
    </lineage>
</organism>
<dbReference type="EMBL" id="AP009240">
    <property type="protein sequence ID" value="BAG77405.1"/>
    <property type="molecule type" value="Genomic_DNA"/>
</dbReference>
<dbReference type="RefSeq" id="WP_001229265.1">
    <property type="nucleotide sequence ID" value="NC_011415.1"/>
</dbReference>
<dbReference type="SMR" id="B6I8Q5"/>
<dbReference type="GeneID" id="93775925"/>
<dbReference type="KEGG" id="ecy:ECSE_1881"/>
<dbReference type="HOGENOM" id="CLU_105066_1_3_6"/>
<dbReference type="Proteomes" id="UP000008199">
    <property type="component" value="Chromosome"/>
</dbReference>
<dbReference type="GO" id="GO:0005829">
    <property type="term" value="C:cytosol"/>
    <property type="evidence" value="ECO:0007669"/>
    <property type="project" value="TreeGrafter"/>
</dbReference>
<dbReference type="GO" id="GO:0003677">
    <property type="term" value="F:DNA binding"/>
    <property type="evidence" value="ECO:0007669"/>
    <property type="project" value="UniProtKB-UniRule"/>
</dbReference>
<dbReference type="GO" id="GO:0030527">
    <property type="term" value="F:structural constituent of chromatin"/>
    <property type="evidence" value="ECO:0007669"/>
    <property type="project" value="InterPro"/>
</dbReference>
<dbReference type="GO" id="GO:0006310">
    <property type="term" value="P:DNA recombination"/>
    <property type="evidence" value="ECO:0007669"/>
    <property type="project" value="UniProtKB-UniRule"/>
</dbReference>
<dbReference type="GO" id="GO:0009893">
    <property type="term" value="P:positive regulation of metabolic process"/>
    <property type="evidence" value="ECO:0007669"/>
    <property type="project" value="UniProtKB-ARBA"/>
</dbReference>
<dbReference type="GO" id="GO:0006355">
    <property type="term" value="P:regulation of DNA-templated transcription"/>
    <property type="evidence" value="ECO:0007669"/>
    <property type="project" value="UniProtKB-UniRule"/>
</dbReference>
<dbReference type="GO" id="GO:0006417">
    <property type="term" value="P:regulation of translation"/>
    <property type="evidence" value="ECO:0007669"/>
    <property type="project" value="UniProtKB-UniRule"/>
</dbReference>
<dbReference type="CDD" id="cd13835">
    <property type="entry name" value="IHF_A"/>
    <property type="match status" value="1"/>
</dbReference>
<dbReference type="FunFam" id="4.10.520.10:FF:000002">
    <property type="entry name" value="Integration host factor subunit alpha"/>
    <property type="match status" value="1"/>
</dbReference>
<dbReference type="Gene3D" id="4.10.520.10">
    <property type="entry name" value="IHF-like DNA-binding proteins"/>
    <property type="match status" value="1"/>
</dbReference>
<dbReference type="HAMAP" id="MF_00380">
    <property type="entry name" value="IHF_alpha"/>
    <property type="match status" value="1"/>
</dbReference>
<dbReference type="InterPro" id="IPR000119">
    <property type="entry name" value="Hist_DNA-bd"/>
</dbReference>
<dbReference type="InterPro" id="IPR020816">
    <property type="entry name" value="Histone-like_DNA-bd_CS"/>
</dbReference>
<dbReference type="InterPro" id="IPR010992">
    <property type="entry name" value="IHF-like_DNA-bd_dom_sf"/>
</dbReference>
<dbReference type="InterPro" id="IPR005684">
    <property type="entry name" value="IHF_alpha"/>
</dbReference>
<dbReference type="NCBIfam" id="TIGR00987">
    <property type="entry name" value="himA"/>
    <property type="match status" value="1"/>
</dbReference>
<dbReference type="NCBIfam" id="NF001401">
    <property type="entry name" value="PRK00285.1"/>
    <property type="match status" value="1"/>
</dbReference>
<dbReference type="PANTHER" id="PTHR33175">
    <property type="entry name" value="DNA-BINDING PROTEIN HU"/>
    <property type="match status" value="1"/>
</dbReference>
<dbReference type="PANTHER" id="PTHR33175:SF2">
    <property type="entry name" value="INTEGRATION HOST FACTOR SUBUNIT ALPHA"/>
    <property type="match status" value="1"/>
</dbReference>
<dbReference type="Pfam" id="PF00216">
    <property type="entry name" value="Bac_DNA_binding"/>
    <property type="match status" value="1"/>
</dbReference>
<dbReference type="PRINTS" id="PR01727">
    <property type="entry name" value="DNABINDINGHU"/>
</dbReference>
<dbReference type="SMART" id="SM00411">
    <property type="entry name" value="BHL"/>
    <property type="match status" value="1"/>
</dbReference>
<dbReference type="SUPFAM" id="SSF47729">
    <property type="entry name" value="IHF-like DNA-binding proteins"/>
    <property type="match status" value="1"/>
</dbReference>
<dbReference type="PROSITE" id="PS00045">
    <property type="entry name" value="HISTONE_LIKE"/>
    <property type="match status" value="1"/>
</dbReference>
<comment type="function">
    <text evidence="1">This protein is one of the two subunits of integration host factor, a specific DNA-binding protein that functions in genetic recombination as well as in transcriptional and translational control.</text>
</comment>
<comment type="subunit">
    <text evidence="1">Heterodimer of an alpha and a beta chain.</text>
</comment>
<comment type="similarity">
    <text evidence="1">Belongs to the bacterial histone-like protein family.</text>
</comment>
<sequence length="99" mass="11354">MALTKAEMSEYLFDKLGLSKRDAKELVELFFEEIRRALENGEQVKLSGFGNFDLRDKNQRPGRNPKTGEDIPITARRVVTFRPGQKLKSRVENASPKDE</sequence>
<gene>
    <name evidence="1" type="primary">ihfA</name>
    <name evidence="1" type="synonym">himA</name>
    <name type="ordered locus">ECSE_1881</name>
</gene>
<accession>B6I8Q5</accession>
<keyword id="KW-0233">DNA recombination</keyword>
<keyword id="KW-0238">DNA-binding</keyword>
<keyword id="KW-0804">Transcription</keyword>
<keyword id="KW-0805">Transcription regulation</keyword>
<keyword id="KW-0810">Translation regulation</keyword>
<name>IHFA_ECOSE</name>
<protein>
    <recommendedName>
        <fullName evidence="1">Integration host factor subunit alpha</fullName>
        <shortName evidence="1">IHF-alpha</shortName>
    </recommendedName>
</protein>